<evidence type="ECO:0000255" key="1">
    <source>
        <dbReference type="HAMAP-Rule" id="MF_02002"/>
    </source>
</evidence>
<proteinExistence type="inferred from homology"/>
<name>SYI_HAEI8</name>
<protein>
    <recommendedName>
        <fullName evidence="1">Isoleucine--tRNA ligase</fullName>
        <ecNumber evidence="1">6.1.1.5</ecNumber>
    </recommendedName>
    <alternativeName>
        <fullName evidence="1">Isoleucyl-tRNA synthetase</fullName>
        <shortName evidence="1">IleRS</shortName>
    </alternativeName>
</protein>
<comment type="function">
    <text evidence="1">Catalyzes the attachment of isoleucine to tRNA(Ile). As IleRS can inadvertently accommodate and process structurally similar amino acids such as valine, to avoid such errors it has two additional distinct tRNA(Ile)-dependent editing activities. One activity is designated as 'pretransfer' editing and involves the hydrolysis of activated Val-AMP. The other activity is designated 'posttransfer' editing and involves deacylation of mischarged Val-tRNA(Ile).</text>
</comment>
<comment type="catalytic activity">
    <reaction evidence="1">
        <text>tRNA(Ile) + L-isoleucine + ATP = L-isoleucyl-tRNA(Ile) + AMP + diphosphate</text>
        <dbReference type="Rhea" id="RHEA:11060"/>
        <dbReference type="Rhea" id="RHEA-COMP:9666"/>
        <dbReference type="Rhea" id="RHEA-COMP:9695"/>
        <dbReference type="ChEBI" id="CHEBI:30616"/>
        <dbReference type="ChEBI" id="CHEBI:33019"/>
        <dbReference type="ChEBI" id="CHEBI:58045"/>
        <dbReference type="ChEBI" id="CHEBI:78442"/>
        <dbReference type="ChEBI" id="CHEBI:78528"/>
        <dbReference type="ChEBI" id="CHEBI:456215"/>
        <dbReference type="EC" id="6.1.1.5"/>
    </reaction>
</comment>
<comment type="cofactor">
    <cofactor evidence="1">
        <name>Zn(2+)</name>
        <dbReference type="ChEBI" id="CHEBI:29105"/>
    </cofactor>
    <text evidence="1">Binds 1 zinc ion per subunit.</text>
</comment>
<comment type="subunit">
    <text evidence="1">Monomer.</text>
</comment>
<comment type="subcellular location">
    <subcellularLocation>
        <location evidence="1">Cytoplasm</location>
    </subcellularLocation>
</comment>
<comment type="domain">
    <text evidence="1">IleRS has two distinct active sites: one for aminoacylation and one for editing. The misactivated valine is translocated from the active site to the editing site, which sterically excludes the correctly activated isoleucine. The single editing site contains two valyl binding pockets, one specific for each substrate (Val-AMP or Val-tRNA(Ile)).</text>
</comment>
<comment type="similarity">
    <text evidence="1">Belongs to the class-I aminoacyl-tRNA synthetase family. IleS type 1 subfamily.</text>
</comment>
<keyword id="KW-0030">Aminoacyl-tRNA synthetase</keyword>
<keyword id="KW-0067">ATP-binding</keyword>
<keyword id="KW-0963">Cytoplasm</keyword>
<keyword id="KW-0436">Ligase</keyword>
<keyword id="KW-0479">Metal-binding</keyword>
<keyword id="KW-0547">Nucleotide-binding</keyword>
<keyword id="KW-0648">Protein biosynthesis</keyword>
<keyword id="KW-0862">Zinc</keyword>
<dbReference type="EC" id="6.1.1.5" evidence="1"/>
<dbReference type="EMBL" id="CP000057">
    <property type="protein sequence ID" value="AAX88002.1"/>
    <property type="molecule type" value="Genomic_DNA"/>
</dbReference>
<dbReference type="RefSeq" id="WP_011272312.1">
    <property type="nucleotide sequence ID" value="NC_007146.2"/>
</dbReference>
<dbReference type="SMR" id="Q4QLU5"/>
<dbReference type="GeneID" id="93220001"/>
<dbReference type="KEGG" id="hit:NTHI1135"/>
<dbReference type="HOGENOM" id="CLU_001493_7_1_6"/>
<dbReference type="Proteomes" id="UP000002525">
    <property type="component" value="Chromosome"/>
</dbReference>
<dbReference type="GO" id="GO:0005829">
    <property type="term" value="C:cytosol"/>
    <property type="evidence" value="ECO:0007669"/>
    <property type="project" value="TreeGrafter"/>
</dbReference>
<dbReference type="GO" id="GO:0002161">
    <property type="term" value="F:aminoacyl-tRNA deacylase activity"/>
    <property type="evidence" value="ECO:0007669"/>
    <property type="project" value="InterPro"/>
</dbReference>
<dbReference type="GO" id="GO:0005524">
    <property type="term" value="F:ATP binding"/>
    <property type="evidence" value="ECO:0007669"/>
    <property type="project" value="UniProtKB-UniRule"/>
</dbReference>
<dbReference type="GO" id="GO:0004822">
    <property type="term" value="F:isoleucine-tRNA ligase activity"/>
    <property type="evidence" value="ECO:0007669"/>
    <property type="project" value="UniProtKB-UniRule"/>
</dbReference>
<dbReference type="GO" id="GO:0000049">
    <property type="term" value="F:tRNA binding"/>
    <property type="evidence" value="ECO:0007669"/>
    <property type="project" value="InterPro"/>
</dbReference>
<dbReference type="GO" id="GO:0008270">
    <property type="term" value="F:zinc ion binding"/>
    <property type="evidence" value="ECO:0007669"/>
    <property type="project" value="UniProtKB-UniRule"/>
</dbReference>
<dbReference type="GO" id="GO:0006428">
    <property type="term" value="P:isoleucyl-tRNA aminoacylation"/>
    <property type="evidence" value="ECO:0007669"/>
    <property type="project" value="UniProtKB-UniRule"/>
</dbReference>
<dbReference type="CDD" id="cd07960">
    <property type="entry name" value="Anticodon_Ia_Ile_BEm"/>
    <property type="match status" value="1"/>
</dbReference>
<dbReference type="CDD" id="cd00818">
    <property type="entry name" value="IleRS_core"/>
    <property type="match status" value="1"/>
</dbReference>
<dbReference type="FunFam" id="1.10.730.20:FF:000001">
    <property type="entry name" value="Isoleucine--tRNA ligase"/>
    <property type="match status" value="1"/>
</dbReference>
<dbReference type="FunFam" id="3.40.50.620:FF:000042">
    <property type="entry name" value="Isoleucine--tRNA ligase"/>
    <property type="match status" value="1"/>
</dbReference>
<dbReference type="FunFam" id="3.40.50.620:FF:000048">
    <property type="entry name" value="Isoleucine--tRNA ligase"/>
    <property type="match status" value="1"/>
</dbReference>
<dbReference type="FunFam" id="3.90.740.10:FF:000002">
    <property type="entry name" value="Isoleucine--tRNA ligase"/>
    <property type="match status" value="1"/>
</dbReference>
<dbReference type="Gene3D" id="1.10.730.20">
    <property type="match status" value="1"/>
</dbReference>
<dbReference type="Gene3D" id="3.40.50.620">
    <property type="entry name" value="HUPs"/>
    <property type="match status" value="2"/>
</dbReference>
<dbReference type="Gene3D" id="3.90.740.10">
    <property type="entry name" value="Valyl/Leucyl/Isoleucyl-tRNA synthetase, editing domain"/>
    <property type="match status" value="1"/>
</dbReference>
<dbReference type="HAMAP" id="MF_02002">
    <property type="entry name" value="Ile_tRNA_synth_type1"/>
    <property type="match status" value="1"/>
</dbReference>
<dbReference type="InterPro" id="IPR001412">
    <property type="entry name" value="aa-tRNA-synth_I_CS"/>
</dbReference>
<dbReference type="InterPro" id="IPR002300">
    <property type="entry name" value="aa-tRNA-synth_Ia"/>
</dbReference>
<dbReference type="InterPro" id="IPR033708">
    <property type="entry name" value="Anticodon_Ile_BEm"/>
</dbReference>
<dbReference type="InterPro" id="IPR002301">
    <property type="entry name" value="Ile-tRNA-ligase"/>
</dbReference>
<dbReference type="InterPro" id="IPR023585">
    <property type="entry name" value="Ile-tRNA-ligase_type1"/>
</dbReference>
<dbReference type="InterPro" id="IPR050081">
    <property type="entry name" value="Ile-tRNA_ligase"/>
</dbReference>
<dbReference type="InterPro" id="IPR013155">
    <property type="entry name" value="M/V/L/I-tRNA-synth_anticd-bd"/>
</dbReference>
<dbReference type="InterPro" id="IPR014729">
    <property type="entry name" value="Rossmann-like_a/b/a_fold"/>
</dbReference>
<dbReference type="InterPro" id="IPR009080">
    <property type="entry name" value="tRNAsynth_Ia_anticodon-bd"/>
</dbReference>
<dbReference type="InterPro" id="IPR009008">
    <property type="entry name" value="Val/Leu/Ile-tRNA-synth_edit"/>
</dbReference>
<dbReference type="InterPro" id="IPR010663">
    <property type="entry name" value="Znf_FPG/IleRS"/>
</dbReference>
<dbReference type="NCBIfam" id="TIGR00392">
    <property type="entry name" value="ileS"/>
    <property type="match status" value="1"/>
</dbReference>
<dbReference type="PANTHER" id="PTHR42765:SF1">
    <property type="entry name" value="ISOLEUCINE--TRNA LIGASE, MITOCHONDRIAL"/>
    <property type="match status" value="1"/>
</dbReference>
<dbReference type="PANTHER" id="PTHR42765">
    <property type="entry name" value="SOLEUCYL-TRNA SYNTHETASE"/>
    <property type="match status" value="1"/>
</dbReference>
<dbReference type="Pfam" id="PF08264">
    <property type="entry name" value="Anticodon_1"/>
    <property type="match status" value="1"/>
</dbReference>
<dbReference type="Pfam" id="PF00133">
    <property type="entry name" value="tRNA-synt_1"/>
    <property type="match status" value="1"/>
</dbReference>
<dbReference type="Pfam" id="PF06827">
    <property type="entry name" value="zf-FPG_IleRS"/>
    <property type="match status" value="1"/>
</dbReference>
<dbReference type="PRINTS" id="PR00984">
    <property type="entry name" value="TRNASYNTHILE"/>
</dbReference>
<dbReference type="SUPFAM" id="SSF47323">
    <property type="entry name" value="Anticodon-binding domain of a subclass of class I aminoacyl-tRNA synthetases"/>
    <property type="match status" value="1"/>
</dbReference>
<dbReference type="SUPFAM" id="SSF52374">
    <property type="entry name" value="Nucleotidylyl transferase"/>
    <property type="match status" value="1"/>
</dbReference>
<dbReference type="SUPFAM" id="SSF50677">
    <property type="entry name" value="ValRS/IleRS/LeuRS editing domain"/>
    <property type="match status" value="1"/>
</dbReference>
<dbReference type="PROSITE" id="PS00178">
    <property type="entry name" value="AA_TRNA_LIGASE_I"/>
    <property type="match status" value="1"/>
</dbReference>
<accession>Q4QLU5</accession>
<reference key="1">
    <citation type="journal article" date="2005" name="J. Bacteriol.">
        <title>Genomic sequence of an otitis media isolate of nontypeable Haemophilus influenzae: comparative study with H. influenzae serotype d, strain KW20.</title>
        <authorList>
            <person name="Harrison A."/>
            <person name="Dyer D.W."/>
            <person name="Gillaspy A."/>
            <person name="Ray W.C."/>
            <person name="Mungur R."/>
            <person name="Carson M.B."/>
            <person name="Zhong H."/>
            <person name="Gipson J."/>
            <person name="Gipson M."/>
            <person name="Johnson L.S."/>
            <person name="Lewis L."/>
            <person name="Bakaletz L.O."/>
            <person name="Munson R.S. Jr."/>
        </authorList>
    </citation>
    <scope>NUCLEOTIDE SEQUENCE [LARGE SCALE GENOMIC DNA]</scope>
    <source>
        <strain>86-028NP</strain>
    </source>
</reference>
<feature type="chain" id="PRO_0000098396" description="Isoleucine--tRNA ligase">
    <location>
        <begin position="1"/>
        <end position="941"/>
    </location>
</feature>
<feature type="short sequence motif" description="'HIGH' region">
    <location>
        <begin position="59"/>
        <end position="69"/>
    </location>
</feature>
<feature type="short sequence motif" description="'KMSKS' region">
    <location>
        <begin position="603"/>
        <end position="607"/>
    </location>
</feature>
<feature type="binding site" evidence="1">
    <location>
        <position position="562"/>
    </location>
    <ligand>
        <name>L-isoleucyl-5'-AMP</name>
        <dbReference type="ChEBI" id="CHEBI:178002"/>
    </ligand>
</feature>
<feature type="binding site" evidence="1">
    <location>
        <position position="606"/>
    </location>
    <ligand>
        <name>ATP</name>
        <dbReference type="ChEBI" id="CHEBI:30616"/>
    </ligand>
</feature>
<feature type="binding site" evidence="1">
    <location>
        <position position="904"/>
    </location>
    <ligand>
        <name>Zn(2+)</name>
        <dbReference type="ChEBI" id="CHEBI:29105"/>
    </ligand>
</feature>
<feature type="binding site" evidence="1">
    <location>
        <position position="907"/>
    </location>
    <ligand>
        <name>Zn(2+)</name>
        <dbReference type="ChEBI" id="CHEBI:29105"/>
    </ligand>
</feature>
<feature type="binding site" evidence="1">
    <location>
        <position position="924"/>
    </location>
    <ligand>
        <name>Zn(2+)</name>
        <dbReference type="ChEBI" id="CHEBI:29105"/>
    </ligand>
</feature>
<feature type="binding site" evidence="1">
    <location>
        <position position="927"/>
    </location>
    <ligand>
        <name>Zn(2+)</name>
        <dbReference type="ChEBI" id="CHEBI:29105"/>
    </ligand>
</feature>
<sequence length="941" mass="106393">MTVDYKNTLNLPETSFPMRGDLAKREPDMLKNWYEKNLYQKIRKASKGKKSFILHDGPPYANGNIHIGHAVNKILKDIIIKSKTALGFDSPYIPGWDCHGLPIELKVEGLVGKPNEKISAAEFRQKCREYASEQVEGQKKDFIRLGVLGDWDNPYLTMNFDTEANIIRTLGKVIENGHLYKGSKPVHWCLDCGSSLAEAEVEYEDKVSPSIYVRFPAESAVEIEAKFSAQGRGQGKLSAIIWTTTPWTMPSNRAIAVNADLEYNLVQLGDERVILAAELVESVAKAVGVEQVEILGSVKGADLELSRFHHPFYDFTVPVILGDHVTTDGGTGLVHTAPDHGLDDFIVGKQYDLPMAGLVSNDGKFISTTEFFAGKGVFEANPLVIEKLQEVGNLLKVEKIKHSYPHCWRHKTPIIFRATPQWFIGMETQGLRQQALGEIKQVRWIPDWGQARIEKMVENRPDWCISRQRTWGVPMTLFVHKETEELHPRTLELLEEVAKRVERAGIQAWWDLDEKELLGADAETYRKVPDTLDVWFDSGSTYSSVVANRLEFNGQDIDMYLEGSDQHRGWFMSSLMLSTATNSKAPYKQVLTHGFTVDGQGRKMSKSIGNIVTPQEVMDKFGGDILRLWVASTDYTGEMTVSDEILKRAADSYRRIRNTARFLLANLNGFDPKRDLVKPEEMISLDRWAVACALDAQNEIKDAYDNYQFHTVVQRLMRFCSVEMGSFYLDIIKDRQYTTKADSLARRSCQTALWHIAEALVRWMAPILSFTADEIWQHLPQTESARAEFVFTEEFYQGLFGLGEDEKLDDAYWQQLIKVRSEVNRVLEISRNNKEIGGGLEAEVTVYANDEYRALLAQLGNELRFVLITSKVDVKSLSEKPADLADSELEGIAVSVTRSNAEKCPRCWHYSDEIGVSPGHPTLCARCVENVVGNGEVRYFA</sequence>
<organism>
    <name type="scientific">Haemophilus influenzae (strain 86-028NP)</name>
    <dbReference type="NCBI Taxonomy" id="281310"/>
    <lineage>
        <taxon>Bacteria</taxon>
        <taxon>Pseudomonadati</taxon>
        <taxon>Pseudomonadota</taxon>
        <taxon>Gammaproteobacteria</taxon>
        <taxon>Pasteurellales</taxon>
        <taxon>Pasteurellaceae</taxon>
        <taxon>Haemophilus</taxon>
    </lineage>
</organism>
<gene>
    <name evidence="1" type="primary">ileS</name>
    <name type="ordered locus">NTHI1135</name>
</gene>